<proteinExistence type="inferred from homology"/>
<accession>Q5PK21</accession>
<sequence>MKRAFIMVLDSFGIGATEDADRFGDVGSDTLGHIAEACAKGEADNGRKGPLNLPNLTRLGLVKAYEGSTGKIAAGMDGNADVIGAYAWAHELSSGKDTPSGHWEIAGVPVLFDWGYFSDHENSFPQELLDKLVKRANLPGYLGNCHSSGTVILDQFGEEHMKTGKPIFYTSADSVFQIACHEETFGLDKLYELCEIAREELTEGGYNIGRVIARPFIGDKAGNFQRTGNRHDLAVEPPAPTVLQKLVDEKQGHVVSVGKIADIYANCGITKKVKATGLDALFDATLKEMKEAGDKTIVFTNFVDFDSSWGHRRDIAGYAAGLELFDRRLPELMELVGEDDILILTADHGCDPSWTGTDHTREHIPVLIYGPKVKPGSLGHRETFADIGQTLATYFGTSPMDYGKNML</sequence>
<keyword id="KW-0963">Cytoplasm</keyword>
<keyword id="KW-0413">Isomerase</keyword>
<keyword id="KW-0464">Manganese</keyword>
<keyword id="KW-0479">Metal-binding</keyword>
<feature type="chain" id="PRO_0000258302" description="Phosphopentomutase">
    <location>
        <begin position="1"/>
        <end position="407"/>
    </location>
</feature>
<feature type="binding site" evidence="1">
    <location>
        <position position="10"/>
    </location>
    <ligand>
        <name>Mn(2+)</name>
        <dbReference type="ChEBI" id="CHEBI:29035"/>
        <label>1</label>
    </ligand>
</feature>
<feature type="binding site" evidence="1">
    <location>
        <position position="306"/>
    </location>
    <ligand>
        <name>Mn(2+)</name>
        <dbReference type="ChEBI" id="CHEBI:29035"/>
        <label>2</label>
    </ligand>
</feature>
<feature type="binding site" evidence="1">
    <location>
        <position position="311"/>
    </location>
    <ligand>
        <name>Mn(2+)</name>
        <dbReference type="ChEBI" id="CHEBI:29035"/>
        <label>2</label>
    </ligand>
</feature>
<feature type="binding site" evidence="1">
    <location>
        <position position="347"/>
    </location>
    <ligand>
        <name>Mn(2+)</name>
        <dbReference type="ChEBI" id="CHEBI:29035"/>
        <label>1</label>
    </ligand>
</feature>
<feature type="binding site" evidence="1">
    <location>
        <position position="348"/>
    </location>
    <ligand>
        <name>Mn(2+)</name>
        <dbReference type="ChEBI" id="CHEBI:29035"/>
        <label>1</label>
    </ligand>
</feature>
<feature type="binding site" evidence="1">
    <location>
        <position position="359"/>
    </location>
    <ligand>
        <name>Mn(2+)</name>
        <dbReference type="ChEBI" id="CHEBI:29035"/>
        <label>2</label>
    </ligand>
</feature>
<organism>
    <name type="scientific">Salmonella paratyphi A (strain ATCC 9150 / SARB42)</name>
    <dbReference type="NCBI Taxonomy" id="295319"/>
    <lineage>
        <taxon>Bacteria</taxon>
        <taxon>Pseudomonadati</taxon>
        <taxon>Pseudomonadota</taxon>
        <taxon>Gammaproteobacteria</taxon>
        <taxon>Enterobacterales</taxon>
        <taxon>Enterobacteriaceae</taxon>
        <taxon>Salmonella</taxon>
    </lineage>
</organism>
<gene>
    <name evidence="1" type="primary">deoB</name>
    <name type="ordered locus">SPA4383</name>
</gene>
<comment type="function">
    <text evidence="1">Isomerase that catalyzes the conversion of deoxy-ribose 1-phosphate (dRib-1-P) and ribose 1-phosphate (Rib-1-P) to deoxy-ribose 5-phosphate (dRib-5-P) and ribose 5-phosphate (Rib-5-P), respectively.</text>
</comment>
<comment type="catalytic activity">
    <reaction evidence="1">
        <text>2-deoxy-alpha-D-ribose 1-phosphate = 2-deoxy-D-ribose 5-phosphate</text>
        <dbReference type="Rhea" id="RHEA:27658"/>
        <dbReference type="ChEBI" id="CHEBI:57259"/>
        <dbReference type="ChEBI" id="CHEBI:62877"/>
        <dbReference type="EC" id="5.4.2.7"/>
    </reaction>
</comment>
<comment type="catalytic activity">
    <reaction evidence="1">
        <text>alpha-D-ribose 1-phosphate = D-ribose 5-phosphate</text>
        <dbReference type="Rhea" id="RHEA:18793"/>
        <dbReference type="ChEBI" id="CHEBI:57720"/>
        <dbReference type="ChEBI" id="CHEBI:78346"/>
        <dbReference type="EC" id="5.4.2.7"/>
    </reaction>
</comment>
<comment type="cofactor">
    <cofactor evidence="1">
        <name>Mn(2+)</name>
        <dbReference type="ChEBI" id="CHEBI:29035"/>
    </cofactor>
    <text evidence="1">Binds 2 manganese ions.</text>
</comment>
<comment type="pathway">
    <text evidence="1">Carbohydrate degradation; 2-deoxy-D-ribose 1-phosphate degradation; D-glyceraldehyde 3-phosphate and acetaldehyde from 2-deoxy-alpha-D-ribose 1-phosphate: step 1/2.</text>
</comment>
<comment type="subcellular location">
    <subcellularLocation>
        <location evidence="1">Cytoplasm</location>
    </subcellularLocation>
</comment>
<comment type="similarity">
    <text evidence="1">Belongs to the phosphopentomutase family.</text>
</comment>
<dbReference type="EC" id="5.4.2.7" evidence="1"/>
<dbReference type="EMBL" id="CP000026">
    <property type="protein sequence ID" value="AAV80106.1"/>
    <property type="molecule type" value="Genomic_DNA"/>
</dbReference>
<dbReference type="RefSeq" id="WP_000816457.1">
    <property type="nucleotide sequence ID" value="NC_006511.1"/>
</dbReference>
<dbReference type="SMR" id="Q5PK21"/>
<dbReference type="KEGG" id="spt:SPA4383"/>
<dbReference type="HOGENOM" id="CLU_053861_0_0_6"/>
<dbReference type="UniPathway" id="UPA00002">
    <property type="reaction ID" value="UER00467"/>
</dbReference>
<dbReference type="Proteomes" id="UP000008185">
    <property type="component" value="Chromosome"/>
</dbReference>
<dbReference type="GO" id="GO:0005829">
    <property type="term" value="C:cytosol"/>
    <property type="evidence" value="ECO:0007669"/>
    <property type="project" value="TreeGrafter"/>
</dbReference>
<dbReference type="GO" id="GO:0000287">
    <property type="term" value="F:magnesium ion binding"/>
    <property type="evidence" value="ECO:0007669"/>
    <property type="project" value="InterPro"/>
</dbReference>
<dbReference type="GO" id="GO:0030145">
    <property type="term" value="F:manganese ion binding"/>
    <property type="evidence" value="ECO:0007669"/>
    <property type="project" value="UniProtKB-UniRule"/>
</dbReference>
<dbReference type="GO" id="GO:0008973">
    <property type="term" value="F:phosphopentomutase activity"/>
    <property type="evidence" value="ECO:0007669"/>
    <property type="project" value="UniProtKB-UniRule"/>
</dbReference>
<dbReference type="GO" id="GO:0006018">
    <property type="term" value="P:2-deoxyribose 1-phosphate catabolic process"/>
    <property type="evidence" value="ECO:0007669"/>
    <property type="project" value="UniProtKB-UniRule"/>
</dbReference>
<dbReference type="GO" id="GO:0006015">
    <property type="term" value="P:5-phosphoribose 1-diphosphate biosynthetic process"/>
    <property type="evidence" value="ECO:0007669"/>
    <property type="project" value="UniProtKB-UniPathway"/>
</dbReference>
<dbReference type="GO" id="GO:0043094">
    <property type="term" value="P:metabolic compound salvage"/>
    <property type="evidence" value="ECO:0007669"/>
    <property type="project" value="InterPro"/>
</dbReference>
<dbReference type="GO" id="GO:0009117">
    <property type="term" value="P:nucleotide metabolic process"/>
    <property type="evidence" value="ECO:0007669"/>
    <property type="project" value="InterPro"/>
</dbReference>
<dbReference type="CDD" id="cd16009">
    <property type="entry name" value="PPM"/>
    <property type="match status" value="1"/>
</dbReference>
<dbReference type="FunFam" id="3.30.70.1250:FF:000001">
    <property type="entry name" value="Phosphopentomutase"/>
    <property type="match status" value="1"/>
</dbReference>
<dbReference type="Gene3D" id="3.40.720.10">
    <property type="entry name" value="Alkaline Phosphatase, subunit A"/>
    <property type="match status" value="1"/>
</dbReference>
<dbReference type="Gene3D" id="3.30.70.1250">
    <property type="entry name" value="Phosphopentomutase"/>
    <property type="match status" value="1"/>
</dbReference>
<dbReference type="HAMAP" id="MF_00740">
    <property type="entry name" value="Phosphopentomut"/>
    <property type="match status" value="1"/>
</dbReference>
<dbReference type="InterPro" id="IPR017850">
    <property type="entry name" value="Alkaline_phosphatase_core_sf"/>
</dbReference>
<dbReference type="InterPro" id="IPR010045">
    <property type="entry name" value="DeoB"/>
</dbReference>
<dbReference type="InterPro" id="IPR006124">
    <property type="entry name" value="Metalloenzyme"/>
</dbReference>
<dbReference type="InterPro" id="IPR024052">
    <property type="entry name" value="Phosphopentomutase_DeoB_cap_sf"/>
</dbReference>
<dbReference type="NCBIfam" id="TIGR01696">
    <property type="entry name" value="deoB"/>
    <property type="match status" value="1"/>
</dbReference>
<dbReference type="NCBIfam" id="NF003766">
    <property type="entry name" value="PRK05362.1"/>
    <property type="match status" value="1"/>
</dbReference>
<dbReference type="PANTHER" id="PTHR21110">
    <property type="entry name" value="PHOSPHOPENTOMUTASE"/>
    <property type="match status" value="1"/>
</dbReference>
<dbReference type="PANTHER" id="PTHR21110:SF0">
    <property type="entry name" value="PHOSPHOPENTOMUTASE"/>
    <property type="match status" value="1"/>
</dbReference>
<dbReference type="Pfam" id="PF01676">
    <property type="entry name" value="Metalloenzyme"/>
    <property type="match status" value="1"/>
</dbReference>
<dbReference type="PIRSF" id="PIRSF001491">
    <property type="entry name" value="Ppentomutase"/>
    <property type="match status" value="1"/>
</dbReference>
<dbReference type="SUPFAM" id="SSF53649">
    <property type="entry name" value="Alkaline phosphatase-like"/>
    <property type="match status" value="1"/>
</dbReference>
<dbReference type="SUPFAM" id="SSF143856">
    <property type="entry name" value="DeoB insert domain-like"/>
    <property type="match status" value="1"/>
</dbReference>
<reference key="1">
    <citation type="journal article" date="2004" name="Nat. Genet.">
        <title>Comparison of genome degradation in Paratyphi A and Typhi, human-restricted serovars of Salmonella enterica that cause typhoid.</title>
        <authorList>
            <person name="McClelland M."/>
            <person name="Sanderson K.E."/>
            <person name="Clifton S.W."/>
            <person name="Latreille P."/>
            <person name="Porwollik S."/>
            <person name="Sabo A."/>
            <person name="Meyer R."/>
            <person name="Bieri T."/>
            <person name="Ozersky P."/>
            <person name="McLellan M."/>
            <person name="Harkins C.R."/>
            <person name="Wang C."/>
            <person name="Nguyen C."/>
            <person name="Berghoff A."/>
            <person name="Elliott G."/>
            <person name="Kohlberg S."/>
            <person name="Strong C."/>
            <person name="Du F."/>
            <person name="Carter J."/>
            <person name="Kremizki C."/>
            <person name="Layman D."/>
            <person name="Leonard S."/>
            <person name="Sun H."/>
            <person name="Fulton L."/>
            <person name="Nash W."/>
            <person name="Miner T."/>
            <person name="Minx P."/>
            <person name="Delehaunty K."/>
            <person name="Fronick C."/>
            <person name="Magrini V."/>
            <person name="Nhan M."/>
            <person name="Warren W."/>
            <person name="Florea L."/>
            <person name="Spieth J."/>
            <person name="Wilson R.K."/>
        </authorList>
    </citation>
    <scope>NUCLEOTIDE SEQUENCE [LARGE SCALE GENOMIC DNA]</scope>
    <source>
        <strain>ATCC 9150 / SARB42</strain>
    </source>
</reference>
<protein>
    <recommendedName>
        <fullName evidence="1">Phosphopentomutase</fullName>
        <ecNumber evidence="1">5.4.2.7</ecNumber>
    </recommendedName>
    <alternativeName>
        <fullName evidence="1">Phosphodeoxyribomutase</fullName>
    </alternativeName>
</protein>
<evidence type="ECO:0000255" key="1">
    <source>
        <dbReference type="HAMAP-Rule" id="MF_00740"/>
    </source>
</evidence>
<name>DEOB_SALPA</name>